<name>URE1_DECAR</name>
<sequence>MMANKITRQAYAEMFGPTTGDRMRLADTELIIEVEKDYTIYGEEVKFGGGKVIRDGMGQGQRLSAETVDTVITNALIVDAVTGIVKADIGLKEGRIAAIGKAGNPDIQPGVTIVIGPGTEVIAGEGMIVTAGGIDSHIHFICPQQIDEALYSGVTTMIGGGTGPATGTFATTCTPGPWHIHRMLEAADAFPMNLGFLGKGNASLPEALREQVEAGVMGLKLHEDWGTTPAAIDCCLTVADEMDVQVAIHSDTLNESGFVEATLGAFKGRTIHTFHTEGAGGGHAPDIIKAAGLPNVLPSSTNPTMPYTVNTIDEHLDMLMVCHHLDPSIAEDIAFAESRIRRETIAAEDILHDLGAFSMMSSDSQAMGRVGEVIIRTWQAAHKMKLQRGALPEDSARNDNFRVKRYIAKYTINPALTHGIAHTVGSVEVGKLADLVLWKPAFFGVKPSLILKGGMIAAAAMGDPNASIPTPQPVHYRPMFGSFGKALKTSVTFISQAALNNPAIAALGLSKPLVAVSGTRTLTKADMVHNGATPEITVDPETYVVKADGVHLVCEPATELPLAQRYFLF</sequence>
<organism>
    <name type="scientific">Dechloromonas aromatica (strain RCB)</name>
    <dbReference type="NCBI Taxonomy" id="159087"/>
    <lineage>
        <taxon>Bacteria</taxon>
        <taxon>Pseudomonadati</taxon>
        <taxon>Pseudomonadota</taxon>
        <taxon>Betaproteobacteria</taxon>
        <taxon>Rhodocyclales</taxon>
        <taxon>Azonexaceae</taxon>
        <taxon>Dechloromonas</taxon>
    </lineage>
</organism>
<comment type="catalytic activity">
    <reaction evidence="1">
        <text>urea + 2 H2O + H(+) = hydrogencarbonate + 2 NH4(+)</text>
        <dbReference type="Rhea" id="RHEA:20557"/>
        <dbReference type="ChEBI" id="CHEBI:15377"/>
        <dbReference type="ChEBI" id="CHEBI:15378"/>
        <dbReference type="ChEBI" id="CHEBI:16199"/>
        <dbReference type="ChEBI" id="CHEBI:17544"/>
        <dbReference type="ChEBI" id="CHEBI:28938"/>
        <dbReference type="EC" id="3.5.1.5"/>
    </reaction>
</comment>
<comment type="cofactor">
    <cofactor evidence="1">
        <name>Ni cation</name>
        <dbReference type="ChEBI" id="CHEBI:25516"/>
    </cofactor>
    <text evidence="1">Binds 2 nickel ions per subunit.</text>
</comment>
<comment type="pathway">
    <text evidence="1">Nitrogen metabolism; urea degradation; CO(2) and NH(3) from urea (urease route): step 1/1.</text>
</comment>
<comment type="subunit">
    <text evidence="1">Heterotrimer of UreA (gamma), UreB (beta) and UreC (alpha) subunits. Three heterotrimers associate to form the active enzyme.</text>
</comment>
<comment type="subcellular location">
    <subcellularLocation>
        <location evidence="1">Cytoplasm</location>
    </subcellularLocation>
</comment>
<comment type="PTM">
    <text evidence="1">Carboxylation allows a single lysine to coordinate two nickel ions.</text>
</comment>
<comment type="similarity">
    <text evidence="1">Belongs to the metallo-dependent hydrolases superfamily. Urease alpha subunit family.</text>
</comment>
<reference key="1">
    <citation type="journal article" date="2009" name="BMC Genomics">
        <title>Metabolic analysis of the soil microbe Dechloromonas aromatica str. RCB: indications of a surprisingly complex life-style and cryptic anaerobic pathways for aromatic degradation.</title>
        <authorList>
            <person name="Salinero K.K."/>
            <person name="Keller K."/>
            <person name="Feil W.S."/>
            <person name="Feil H."/>
            <person name="Trong S."/>
            <person name="Di Bartolo G."/>
            <person name="Lapidus A."/>
        </authorList>
    </citation>
    <scope>NUCLEOTIDE SEQUENCE [LARGE SCALE GENOMIC DNA]</scope>
    <source>
        <strain>RCB</strain>
    </source>
</reference>
<proteinExistence type="inferred from homology"/>
<feature type="chain" id="PRO_0000234153" description="Urease subunit alpha">
    <location>
        <begin position="1"/>
        <end position="569"/>
    </location>
</feature>
<feature type="domain" description="Urease" evidence="1">
    <location>
        <begin position="132"/>
        <end position="569"/>
    </location>
</feature>
<feature type="active site" description="Proton donor" evidence="1">
    <location>
        <position position="323"/>
    </location>
</feature>
<feature type="binding site" evidence="1">
    <location>
        <position position="137"/>
    </location>
    <ligand>
        <name>Ni(2+)</name>
        <dbReference type="ChEBI" id="CHEBI:49786"/>
        <label>1</label>
    </ligand>
</feature>
<feature type="binding site" evidence="1">
    <location>
        <position position="139"/>
    </location>
    <ligand>
        <name>Ni(2+)</name>
        <dbReference type="ChEBI" id="CHEBI:49786"/>
        <label>1</label>
    </ligand>
</feature>
<feature type="binding site" description="via carbamate group" evidence="1">
    <location>
        <position position="220"/>
    </location>
    <ligand>
        <name>Ni(2+)</name>
        <dbReference type="ChEBI" id="CHEBI:49786"/>
        <label>1</label>
    </ligand>
</feature>
<feature type="binding site" description="via carbamate group" evidence="1">
    <location>
        <position position="220"/>
    </location>
    <ligand>
        <name>Ni(2+)</name>
        <dbReference type="ChEBI" id="CHEBI:49786"/>
        <label>2</label>
    </ligand>
</feature>
<feature type="binding site" evidence="1">
    <location>
        <position position="222"/>
    </location>
    <ligand>
        <name>substrate</name>
    </ligand>
</feature>
<feature type="binding site" evidence="1">
    <location>
        <position position="249"/>
    </location>
    <ligand>
        <name>Ni(2+)</name>
        <dbReference type="ChEBI" id="CHEBI:49786"/>
        <label>2</label>
    </ligand>
</feature>
<feature type="binding site" evidence="1">
    <location>
        <position position="275"/>
    </location>
    <ligand>
        <name>Ni(2+)</name>
        <dbReference type="ChEBI" id="CHEBI:49786"/>
        <label>2</label>
    </ligand>
</feature>
<feature type="binding site" evidence="1">
    <location>
        <position position="363"/>
    </location>
    <ligand>
        <name>Ni(2+)</name>
        <dbReference type="ChEBI" id="CHEBI:49786"/>
        <label>1</label>
    </ligand>
</feature>
<feature type="modified residue" description="N6-carboxylysine" evidence="1">
    <location>
        <position position="220"/>
    </location>
</feature>
<gene>
    <name evidence="1" type="primary">ureC</name>
    <name type="ordered locus">Daro_1427</name>
</gene>
<protein>
    <recommendedName>
        <fullName evidence="1">Urease subunit alpha</fullName>
        <ecNumber evidence="1">3.5.1.5</ecNumber>
    </recommendedName>
    <alternativeName>
        <fullName evidence="1">Urea amidohydrolase subunit alpha</fullName>
    </alternativeName>
</protein>
<dbReference type="EC" id="3.5.1.5" evidence="1"/>
<dbReference type="EMBL" id="CP000089">
    <property type="protein sequence ID" value="AAZ46176.1"/>
    <property type="molecule type" value="Genomic_DNA"/>
</dbReference>
<dbReference type="SMR" id="Q47G55"/>
<dbReference type="STRING" id="159087.Daro_1427"/>
<dbReference type="KEGG" id="dar:Daro_1427"/>
<dbReference type="eggNOG" id="COG0804">
    <property type="taxonomic scope" value="Bacteria"/>
</dbReference>
<dbReference type="HOGENOM" id="CLU_000980_0_0_4"/>
<dbReference type="UniPathway" id="UPA00258">
    <property type="reaction ID" value="UER00370"/>
</dbReference>
<dbReference type="GO" id="GO:0005737">
    <property type="term" value="C:cytoplasm"/>
    <property type="evidence" value="ECO:0007669"/>
    <property type="project" value="UniProtKB-SubCell"/>
</dbReference>
<dbReference type="GO" id="GO:0016151">
    <property type="term" value="F:nickel cation binding"/>
    <property type="evidence" value="ECO:0007669"/>
    <property type="project" value="UniProtKB-UniRule"/>
</dbReference>
<dbReference type="GO" id="GO:0009039">
    <property type="term" value="F:urease activity"/>
    <property type="evidence" value="ECO:0007669"/>
    <property type="project" value="UniProtKB-UniRule"/>
</dbReference>
<dbReference type="GO" id="GO:0043419">
    <property type="term" value="P:urea catabolic process"/>
    <property type="evidence" value="ECO:0007669"/>
    <property type="project" value="UniProtKB-UniRule"/>
</dbReference>
<dbReference type="CDD" id="cd00375">
    <property type="entry name" value="Urease_alpha"/>
    <property type="match status" value="1"/>
</dbReference>
<dbReference type="Gene3D" id="3.20.20.140">
    <property type="entry name" value="Metal-dependent hydrolases"/>
    <property type="match status" value="1"/>
</dbReference>
<dbReference type="Gene3D" id="2.30.40.10">
    <property type="entry name" value="Urease, subunit C, domain 1"/>
    <property type="match status" value="1"/>
</dbReference>
<dbReference type="HAMAP" id="MF_01953">
    <property type="entry name" value="Urease_alpha"/>
    <property type="match status" value="1"/>
</dbReference>
<dbReference type="InterPro" id="IPR006680">
    <property type="entry name" value="Amidohydro-rel"/>
</dbReference>
<dbReference type="InterPro" id="IPR011059">
    <property type="entry name" value="Metal-dep_hydrolase_composite"/>
</dbReference>
<dbReference type="InterPro" id="IPR032466">
    <property type="entry name" value="Metal_Hydrolase"/>
</dbReference>
<dbReference type="InterPro" id="IPR011612">
    <property type="entry name" value="Urease_alpha_N_dom"/>
</dbReference>
<dbReference type="InterPro" id="IPR050112">
    <property type="entry name" value="Urease_alpha_subunit"/>
</dbReference>
<dbReference type="InterPro" id="IPR017950">
    <property type="entry name" value="Urease_AS"/>
</dbReference>
<dbReference type="InterPro" id="IPR005848">
    <property type="entry name" value="Urease_asu"/>
</dbReference>
<dbReference type="InterPro" id="IPR017951">
    <property type="entry name" value="Urease_asu_c"/>
</dbReference>
<dbReference type="InterPro" id="IPR029754">
    <property type="entry name" value="Urease_Ni-bd"/>
</dbReference>
<dbReference type="NCBIfam" id="NF009685">
    <property type="entry name" value="PRK13206.1"/>
    <property type="match status" value="1"/>
</dbReference>
<dbReference type="NCBIfam" id="NF009686">
    <property type="entry name" value="PRK13207.1"/>
    <property type="match status" value="1"/>
</dbReference>
<dbReference type="NCBIfam" id="TIGR01792">
    <property type="entry name" value="urease_alph"/>
    <property type="match status" value="1"/>
</dbReference>
<dbReference type="PANTHER" id="PTHR43440">
    <property type="entry name" value="UREASE"/>
    <property type="match status" value="1"/>
</dbReference>
<dbReference type="PANTHER" id="PTHR43440:SF1">
    <property type="entry name" value="UREASE"/>
    <property type="match status" value="1"/>
</dbReference>
<dbReference type="Pfam" id="PF01979">
    <property type="entry name" value="Amidohydro_1"/>
    <property type="match status" value="1"/>
</dbReference>
<dbReference type="Pfam" id="PF00449">
    <property type="entry name" value="Urease_alpha"/>
    <property type="match status" value="1"/>
</dbReference>
<dbReference type="PRINTS" id="PR01752">
    <property type="entry name" value="UREASE"/>
</dbReference>
<dbReference type="SUPFAM" id="SSF51338">
    <property type="entry name" value="Composite domain of metallo-dependent hydrolases"/>
    <property type="match status" value="2"/>
</dbReference>
<dbReference type="SUPFAM" id="SSF51556">
    <property type="entry name" value="Metallo-dependent hydrolases"/>
    <property type="match status" value="1"/>
</dbReference>
<dbReference type="PROSITE" id="PS01120">
    <property type="entry name" value="UREASE_1"/>
    <property type="match status" value="1"/>
</dbReference>
<dbReference type="PROSITE" id="PS00145">
    <property type="entry name" value="UREASE_2"/>
    <property type="match status" value="1"/>
</dbReference>
<dbReference type="PROSITE" id="PS51368">
    <property type="entry name" value="UREASE_3"/>
    <property type="match status" value="1"/>
</dbReference>
<keyword id="KW-0963">Cytoplasm</keyword>
<keyword id="KW-0378">Hydrolase</keyword>
<keyword id="KW-0479">Metal-binding</keyword>
<keyword id="KW-0533">Nickel</keyword>
<evidence type="ECO:0000255" key="1">
    <source>
        <dbReference type="HAMAP-Rule" id="MF_01953"/>
    </source>
</evidence>
<accession>Q47G55</accession>